<protein>
    <recommendedName>
        <fullName evidence="1">Sigma factor-binding protein Crl</fullName>
    </recommendedName>
</protein>
<feature type="chain" id="PRO_1000164426" description="Sigma factor-binding protein Crl">
    <location>
        <begin position="1"/>
        <end position="133"/>
    </location>
</feature>
<feature type="region of interest" description="Essential for activity" evidence="1">
    <location>
        <begin position="99"/>
        <end position="122"/>
    </location>
</feature>
<feature type="coiled-coil region" evidence="1">
    <location>
        <begin position="90"/>
        <end position="111"/>
    </location>
</feature>
<keyword id="KW-0010">Activator</keyword>
<keyword id="KW-0175">Coiled coil</keyword>
<keyword id="KW-0963">Cytoplasm</keyword>
<keyword id="KW-0804">Transcription</keyword>
<keyword id="KW-0805">Transcription regulation</keyword>
<dbReference type="EMBL" id="CP000857">
    <property type="protein sequence ID" value="ACN44517.1"/>
    <property type="molecule type" value="Genomic_DNA"/>
</dbReference>
<dbReference type="RefSeq" id="WP_000174693.1">
    <property type="nucleotide sequence ID" value="NC_012125.1"/>
</dbReference>
<dbReference type="SMR" id="C0Q6T8"/>
<dbReference type="KEGG" id="sei:SPC_0330"/>
<dbReference type="HOGENOM" id="CLU_136773_0_0_6"/>
<dbReference type="Proteomes" id="UP000001599">
    <property type="component" value="Chromosome"/>
</dbReference>
<dbReference type="GO" id="GO:0005737">
    <property type="term" value="C:cytoplasm"/>
    <property type="evidence" value="ECO:0007669"/>
    <property type="project" value="UniProtKB-SubCell"/>
</dbReference>
<dbReference type="GO" id="GO:0045893">
    <property type="term" value="P:positive regulation of DNA-templated transcription"/>
    <property type="evidence" value="ECO:0007669"/>
    <property type="project" value="UniProtKB-UniRule"/>
</dbReference>
<dbReference type="Gene3D" id="3.30.310.230">
    <property type="entry name" value="Sigma factor-binding protein Crl monomer"/>
    <property type="match status" value="1"/>
</dbReference>
<dbReference type="HAMAP" id="MF_01178">
    <property type="entry name" value="Crl"/>
    <property type="match status" value="1"/>
</dbReference>
<dbReference type="InterPro" id="IPR009986">
    <property type="entry name" value="Tscrpt_reg_Crl"/>
</dbReference>
<dbReference type="InterPro" id="IPR038208">
    <property type="entry name" value="Tscrpt_reg_Crl_sf"/>
</dbReference>
<dbReference type="NCBIfam" id="NF008217">
    <property type="entry name" value="PRK10984.1"/>
    <property type="match status" value="1"/>
</dbReference>
<dbReference type="Pfam" id="PF07417">
    <property type="entry name" value="Crl"/>
    <property type="match status" value="1"/>
</dbReference>
<sequence>MTLPSGHPKSRLIKKFTALGPYIREGQCEDNRFFFDCLAVCVNVKPAPEKREFWGWWMELEAQEKRFTYRYQFGLFDKEGNWTAVPINETEVVERLEYTLREFHEKLRDLLISMELALEPSDDFNDEPVKLSA</sequence>
<accession>C0Q6T8</accession>
<organism>
    <name type="scientific">Salmonella paratyphi C (strain RKS4594)</name>
    <dbReference type="NCBI Taxonomy" id="476213"/>
    <lineage>
        <taxon>Bacteria</taxon>
        <taxon>Pseudomonadati</taxon>
        <taxon>Pseudomonadota</taxon>
        <taxon>Gammaproteobacteria</taxon>
        <taxon>Enterobacterales</taxon>
        <taxon>Enterobacteriaceae</taxon>
        <taxon>Salmonella</taxon>
    </lineage>
</organism>
<evidence type="ECO:0000255" key="1">
    <source>
        <dbReference type="HAMAP-Rule" id="MF_01178"/>
    </source>
</evidence>
<name>CRL_SALPC</name>
<gene>
    <name evidence="1" type="primary">crl</name>
    <name type="ordered locus">SPC_0330</name>
</gene>
<proteinExistence type="inferred from homology"/>
<comment type="function">
    <text evidence="1">Binds to the sigma-S subunit of RNA polymerase, activating expression of sigma-S-regulated genes. Stimulates RNA polymerase holoenzyme formation and may bind to several other sigma factors, such as sigma-70 and sigma-32.</text>
</comment>
<comment type="subcellular location">
    <subcellularLocation>
        <location evidence="1">Cytoplasm</location>
    </subcellularLocation>
</comment>
<comment type="similarity">
    <text evidence="1">Belongs to the Crl family.</text>
</comment>
<reference key="1">
    <citation type="journal article" date="2009" name="PLoS ONE">
        <title>Salmonella paratyphi C: genetic divergence from Salmonella choleraesuis and pathogenic convergence with Salmonella typhi.</title>
        <authorList>
            <person name="Liu W.-Q."/>
            <person name="Feng Y."/>
            <person name="Wang Y."/>
            <person name="Zou Q.-H."/>
            <person name="Chen F."/>
            <person name="Guo J.-T."/>
            <person name="Peng Y.-H."/>
            <person name="Jin Y."/>
            <person name="Li Y.-G."/>
            <person name="Hu S.-N."/>
            <person name="Johnston R.N."/>
            <person name="Liu G.-R."/>
            <person name="Liu S.-L."/>
        </authorList>
    </citation>
    <scope>NUCLEOTIDE SEQUENCE [LARGE SCALE GENOMIC DNA]</scope>
    <source>
        <strain>RKS4594</strain>
    </source>
</reference>